<comment type="function">
    <text evidence="1">Prevents the cell division inhibition by proteins MinC and MinD at internal division sites while permitting inhibition at polar sites. This ensures cell division at the proper site by restricting the formation of a division septum at the midpoint of the long axis of the cell.</text>
</comment>
<comment type="similarity">
    <text evidence="1">Belongs to the MinE family.</text>
</comment>
<evidence type="ECO:0000255" key="1">
    <source>
        <dbReference type="HAMAP-Rule" id="MF_00262"/>
    </source>
</evidence>
<gene>
    <name evidence="1" type="primary">minE</name>
    <name type="ordered locus">Smlt1250</name>
</gene>
<sequence length="86" mass="9636">MGLFDFLKAKKTTAETAKNRLQIIIAQERSHRGGPDYLPLLQRELLEVIKKYVNIDVDAVKVDLVKDGQHDVLDISVALPEGPDKP</sequence>
<dbReference type="EMBL" id="AM743169">
    <property type="protein sequence ID" value="CAQ44803.1"/>
    <property type="molecule type" value="Genomic_DNA"/>
</dbReference>
<dbReference type="RefSeq" id="WP_005408532.1">
    <property type="nucleotide sequence ID" value="NC_010943.1"/>
</dbReference>
<dbReference type="SMR" id="B2FTA6"/>
<dbReference type="EnsemblBacteria" id="CAQ44803">
    <property type="protein sequence ID" value="CAQ44803"/>
    <property type="gene ID" value="Smlt1250"/>
</dbReference>
<dbReference type="GeneID" id="97260239"/>
<dbReference type="KEGG" id="sml:Smlt1250"/>
<dbReference type="eggNOG" id="COG0851">
    <property type="taxonomic scope" value="Bacteria"/>
</dbReference>
<dbReference type="HOGENOM" id="CLU_137929_2_1_6"/>
<dbReference type="Proteomes" id="UP000008840">
    <property type="component" value="Chromosome"/>
</dbReference>
<dbReference type="GO" id="GO:0051301">
    <property type="term" value="P:cell division"/>
    <property type="evidence" value="ECO:0007669"/>
    <property type="project" value="UniProtKB-KW"/>
</dbReference>
<dbReference type="GO" id="GO:0032955">
    <property type="term" value="P:regulation of division septum assembly"/>
    <property type="evidence" value="ECO:0007669"/>
    <property type="project" value="InterPro"/>
</dbReference>
<dbReference type="FunFam" id="3.30.1070.10:FF:000001">
    <property type="entry name" value="Cell division topological specificity factor"/>
    <property type="match status" value="1"/>
</dbReference>
<dbReference type="Gene3D" id="3.30.1070.10">
    <property type="entry name" value="Cell division topological specificity factor MinE"/>
    <property type="match status" value="1"/>
</dbReference>
<dbReference type="HAMAP" id="MF_00262">
    <property type="entry name" value="MinE"/>
    <property type="match status" value="1"/>
</dbReference>
<dbReference type="InterPro" id="IPR005527">
    <property type="entry name" value="MinE"/>
</dbReference>
<dbReference type="InterPro" id="IPR036707">
    <property type="entry name" value="MinE_sf"/>
</dbReference>
<dbReference type="NCBIfam" id="TIGR01215">
    <property type="entry name" value="minE"/>
    <property type="match status" value="1"/>
</dbReference>
<dbReference type="NCBIfam" id="NF001422">
    <property type="entry name" value="PRK00296.1"/>
    <property type="match status" value="1"/>
</dbReference>
<dbReference type="Pfam" id="PF03776">
    <property type="entry name" value="MinE"/>
    <property type="match status" value="1"/>
</dbReference>
<dbReference type="SUPFAM" id="SSF55229">
    <property type="entry name" value="Cell division protein MinE topological specificity domain"/>
    <property type="match status" value="1"/>
</dbReference>
<accession>B2FTA6</accession>
<protein>
    <recommendedName>
        <fullName evidence="1">Cell division topological specificity factor</fullName>
    </recommendedName>
</protein>
<keyword id="KW-0131">Cell cycle</keyword>
<keyword id="KW-0132">Cell division</keyword>
<keyword id="KW-1185">Reference proteome</keyword>
<organism>
    <name type="scientific">Stenotrophomonas maltophilia (strain K279a)</name>
    <dbReference type="NCBI Taxonomy" id="522373"/>
    <lineage>
        <taxon>Bacteria</taxon>
        <taxon>Pseudomonadati</taxon>
        <taxon>Pseudomonadota</taxon>
        <taxon>Gammaproteobacteria</taxon>
        <taxon>Lysobacterales</taxon>
        <taxon>Lysobacteraceae</taxon>
        <taxon>Stenotrophomonas</taxon>
        <taxon>Stenotrophomonas maltophilia group</taxon>
    </lineage>
</organism>
<proteinExistence type="inferred from homology"/>
<reference key="1">
    <citation type="journal article" date="2008" name="Genome Biol.">
        <title>The complete genome, comparative and functional analysis of Stenotrophomonas maltophilia reveals an organism heavily shielded by drug resistance determinants.</title>
        <authorList>
            <person name="Crossman L.C."/>
            <person name="Gould V.C."/>
            <person name="Dow J.M."/>
            <person name="Vernikos G.S."/>
            <person name="Okazaki A."/>
            <person name="Sebaihia M."/>
            <person name="Saunders D."/>
            <person name="Arrowsmith C."/>
            <person name="Carver T."/>
            <person name="Peters N."/>
            <person name="Adlem E."/>
            <person name="Kerhornou A."/>
            <person name="Lord A."/>
            <person name="Murphy L."/>
            <person name="Seeger K."/>
            <person name="Squares R."/>
            <person name="Rutter S."/>
            <person name="Quail M.A."/>
            <person name="Rajandream M.A."/>
            <person name="Harris D."/>
            <person name="Churcher C."/>
            <person name="Bentley S.D."/>
            <person name="Parkhill J."/>
            <person name="Thomson N.R."/>
            <person name="Avison M.B."/>
        </authorList>
    </citation>
    <scope>NUCLEOTIDE SEQUENCE [LARGE SCALE GENOMIC DNA]</scope>
    <source>
        <strain>K279a</strain>
    </source>
</reference>
<name>MINE_STRMK</name>
<feature type="chain" id="PRO_1000114248" description="Cell division topological specificity factor">
    <location>
        <begin position="1"/>
        <end position="86"/>
    </location>
</feature>